<dbReference type="EC" id="2.8.1.13" evidence="1"/>
<dbReference type="EMBL" id="CT978603">
    <property type="protein sequence ID" value="CAK28605.1"/>
    <property type="molecule type" value="Genomic_DNA"/>
</dbReference>
<dbReference type="SMR" id="A5GUP6"/>
<dbReference type="STRING" id="316278.SynRCC307_1702"/>
<dbReference type="KEGG" id="syr:SynRCC307_1702"/>
<dbReference type="eggNOG" id="COG0482">
    <property type="taxonomic scope" value="Bacteria"/>
</dbReference>
<dbReference type="HOGENOM" id="CLU_035188_0_0_3"/>
<dbReference type="OrthoDB" id="9800696at2"/>
<dbReference type="Proteomes" id="UP000001115">
    <property type="component" value="Chromosome"/>
</dbReference>
<dbReference type="GO" id="GO:0005737">
    <property type="term" value="C:cytoplasm"/>
    <property type="evidence" value="ECO:0007669"/>
    <property type="project" value="UniProtKB-SubCell"/>
</dbReference>
<dbReference type="GO" id="GO:0005524">
    <property type="term" value="F:ATP binding"/>
    <property type="evidence" value="ECO:0007669"/>
    <property type="project" value="UniProtKB-KW"/>
</dbReference>
<dbReference type="GO" id="GO:0000049">
    <property type="term" value="F:tRNA binding"/>
    <property type="evidence" value="ECO:0007669"/>
    <property type="project" value="UniProtKB-KW"/>
</dbReference>
<dbReference type="GO" id="GO:0103016">
    <property type="term" value="F:tRNA-uridine 2-sulfurtransferase activity"/>
    <property type="evidence" value="ECO:0007669"/>
    <property type="project" value="UniProtKB-EC"/>
</dbReference>
<dbReference type="GO" id="GO:0002143">
    <property type="term" value="P:tRNA wobble position uridine thiolation"/>
    <property type="evidence" value="ECO:0007669"/>
    <property type="project" value="TreeGrafter"/>
</dbReference>
<dbReference type="CDD" id="cd01998">
    <property type="entry name" value="MnmA_TRMU-like"/>
    <property type="match status" value="1"/>
</dbReference>
<dbReference type="FunFam" id="2.30.30.280:FF:000001">
    <property type="entry name" value="tRNA-specific 2-thiouridylase MnmA"/>
    <property type="match status" value="1"/>
</dbReference>
<dbReference type="Gene3D" id="2.30.30.280">
    <property type="entry name" value="Adenine nucleotide alpha hydrolases-like domains"/>
    <property type="match status" value="1"/>
</dbReference>
<dbReference type="Gene3D" id="3.40.50.620">
    <property type="entry name" value="HUPs"/>
    <property type="match status" value="1"/>
</dbReference>
<dbReference type="Gene3D" id="2.40.30.10">
    <property type="entry name" value="Translation factors"/>
    <property type="match status" value="1"/>
</dbReference>
<dbReference type="HAMAP" id="MF_00144">
    <property type="entry name" value="tRNA_thiouridyl_MnmA"/>
    <property type="match status" value="1"/>
</dbReference>
<dbReference type="InterPro" id="IPR004506">
    <property type="entry name" value="MnmA-like"/>
</dbReference>
<dbReference type="InterPro" id="IPR046885">
    <property type="entry name" value="MnmA-like_C"/>
</dbReference>
<dbReference type="InterPro" id="IPR046884">
    <property type="entry name" value="MnmA-like_central"/>
</dbReference>
<dbReference type="InterPro" id="IPR023382">
    <property type="entry name" value="MnmA-like_central_sf"/>
</dbReference>
<dbReference type="InterPro" id="IPR014729">
    <property type="entry name" value="Rossmann-like_a/b/a_fold"/>
</dbReference>
<dbReference type="NCBIfam" id="NF001138">
    <property type="entry name" value="PRK00143.1"/>
    <property type="match status" value="1"/>
</dbReference>
<dbReference type="NCBIfam" id="TIGR00420">
    <property type="entry name" value="trmU"/>
    <property type="match status" value="1"/>
</dbReference>
<dbReference type="PANTHER" id="PTHR11933:SF5">
    <property type="entry name" value="MITOCHONDRIAL TRNA-SPECIFIC 2-THIOURIDYLASE 1"/>
    <property type="match status" value="1"/>
</dbReference>
<dbReference type="PANTHER" id="PTHR11933">
    <property type="entry name" value="TRNA 5-METHYLAMINOMETHYL-2-THIOURIDYLATE -METHYLTRANSFERASE"/>
    <property type="match status" value="1"/>
</dbReference>
<dbReference type="Pfam" id="PF03054">
    <property type="entry name" value="tRNA_Me_trans"/>
    <property type="match status" value="1"/>
</dbReference>
<dbReference type="Pfam" id="PF20258">
    <property type="entry name" value="tRNA_Me_trans_C"/>
    <property type="match status" value="1"/>
</dbReference>
<dbReference type="Pfam" id="PF20259">
    <property type="entry name" value="tRNA_Me_trans_M"/>
    <property type="match status" value="1"/>
</dbReference>
<dbReference type="SUPFAM" id="SSF52402">
    <property type="entry name" value="Adenine nucleotide alpha hydrolases-like"/>
    <property type="match status" value="1"/>
</dbReference>
<reference key="1">
    <citation type="submission" date="2006-05" db="EMBL/GenBank/DDBJ databases">
        <authorList>
            <consortium name="Genoscope"/>
        </authorList>
    </citation>
    <scope>NUCLEOTIDE SEQUENCE [LARGE SCALE GENOMIC DNA]</scope>
    <source>
        <strain>RCC307</strain>
    </source>
</reference>
<keyword id="KW-0067">ATP-binding</keyword>
<keyword id="KW-0963">Cytoplasm</keyword>
<keyword id="KW-1015">Disulfide bond</keyword>
<keyword id="KW-0547">Nucleotide-binding</keyword>
<keyword id="KW-1185">Reference proteome</keyword>
<keyword id="KW-0694">RNA-binding</keyword>
<keyword id="KW-0808">Transferase</keyword>
<keyword id="KW-0819">tRNA processing</keyword>
<keyword id="KW-0820">tRNA-binding</keyword>
<sequence length="383" mass="41680">MTTLSSQAAPAVNAVIERLQAWPGEHRVAVGLSGGVDSSLTAALLRDAQWQVEGLTLWLMSGKGACCAEGLVDAAGLCEELEIPHHVVDSRDTFQQEIVQFLVQGYGDGITPLPCSRCNRAVKFGPMLDWAEKERGITRVATGHYARLRPNADGGRTQLLRGLDARKDQSYFLYDLPQAVLQRLIFPLGELTKPDTRAEAARLGLRTAEKPESQDLCLADHHGSMKAFLDAYLPERPGEIVLTDGRVVGQHDGIEHFTIGQRKGLGVAWSEPLHVVRLDGAMNQVVVAPRAEAARGDAVVGAVNWVSIDPPAEPLDVEVQVRYRSAPERARLTPLPPVESDHQAERPHRCRLDFAEEQFSITPGQAAVFYDGEVCLGGGLIQA</sequence>
<protein>
    <recommendedName>
        <fullName evidence="1">tRNA-specific 2-thiouridylase MnmA</fullName>
        <ecNumber evidence="1">2.8.1.13</ecNumber>
    </recommendedName>
</protein>
<name>MNMA_SYNR3</name>
<proteinExistence type="inferred from homology"/>
<feature type="chain" id="PRO_0000349831" description="tRNA-specific 2-thiouridylase MnmA">
    <location>
        <begin position="1"/>
        <end position="383"/>
    </location>
</feature>
<feature type="region of interest" description="Interaction with tRNA" evidence="1">
    <location>
        <begin position="167"/>
        <end position="169"/>
    </location>
</feature>
<feature type="region of interest" description="Interaction with tRNA" evidence="1">
    <location>
        <begin position="322"/>
        <end position="323"/>
    </location>
</feature>
<feature type="active site" description="Nucleophile" evidence="1">
    <location>
        <position position="118"/>
    </location>
</feature>
<feature type="active site" description="Cysteine persulfide intermediate" evidence="1">
    <location>
        <position position="217"/>
    </location>
</feature>
<feature type="binding site" evidence="1">
    <location>
        <begin position="31"/>
        <end position="38"/>
    </location>
    <ligand>
        <name>ATP</name>
        <dbReference type="ChEBI" id="CHEBI:30616"/>
    </ligand>
</feature>
<feature type="binding site" evidence="1">
    <location>
        <position position="57"/>
    </location>
    <ligand>
        <name>ATP</name>
        <dbReference type="ChEBI" id="CHEBI:30616"/>
    </ligand>
</feature>
<feature type="binding site" evidence="1">
    <location>
        <position position="143"/>
    </location>
    <ligand>
        <name>ATP</name>
        <dbReference type="ChEBI" id="CHEBI:30616"/>
    </ligand>
</feature>
<feature type="site" description="Interaction with tRNA" evidence="1">
    <location>
        <position position="144"/>
    </location>
</feature>
<feature type="site" description="Interaction with tRNA" evidence="1">
    <location>
        <position position="365"/>
    </location>
</feature>
<feature type="disulfide bond" description="Alternate" evidence="1">
    <location>
        <begin position="118"/>
        <end position="217"/>
    </location>
</feature>
<accession>A5GUP6</accession>
<comment type="function">
    <text evidence="1">Catalyzes the 2-thiolation of uridine at the wobble position (U34) of tRNA, leading to the formation of s(2)U34.</text>
</comment>
<comment type="catalytic activity">
    <reaction evidence="1">
        <text>S-sulfanyl-L-cysteinyl-[protein] + uridine(34) in tRNA + AH2 + ATP = 2-thiouridine(34) in tRNA + L-cysteinyl-[protein] + A + AMP + diphosphate + H(+)</text>
        <dbReference type="Rhea" id="RHEA:47032"/>
        <dbReference type="Rhea" id="RHEA-COMP:10131"/>
        <dbReference type="Rhea" id="RHEA-COMP:11726"/>
        <dbReference type="Rhea" id="RHEA-COMP:11727"/>
        <dbReference type="Rhea" id="RHEA-COMP:11728"/>
        <dbReference type="ChEBI" id="CHEBI:13193"/>
        <dbReference type="ChEBI" id="CHEBI:15378"/>
        <dbReference type="ChEBI" id="CHEBI:17499"/>
        <dbReference type="ChEBI" id="CHEBI:29950"/>
        <dbReference type="ChEBI" id="CHEBI:30616"/>
        <dbReference type="ChEBI" id="CHEBI:33019"/>
        <dbReference type="ChEBI" id="CHEBI:61963"/>
        <dbReference type="ChEBI" id="CHEBI:65315"/>
        <dbReference type="ChEBI" id="CHEBI:87170"/>
        <dbReference type="ChEBI" id="CHEBI:456215"/>
        <dbReference type="EC" id="2.8.1.13"/>
    </reaction>
</comment>
<comment type="subcellular location">
    <subcellularLocation>
        <location evidence="1">Cytoplasm</location>
    </subcellularLocation>
</comment>
<comment type="similarity">
    <text evidence="1">Belongs to the MnmA/TRMU family.</text>
</comment>
<evidence type="ECO:0000255" key="1">
    <source>
        <dbReference type="HAMAP-Rule" id="MF_00144"/>
    </source>
</evidence>
<organism>
    <name type="scientific">Synechococcus sp. (strain RCC307)</name>
    <dbReference type="NCBI Taxonomy" id="316278"/>
    <lineage>
        <taxon>Bacteria</taxon>
        <taxon>Bacillati</taxon>
        <taxon>Cyanobacteriota</taxon>
        <taxon>Cyanophyceae</taxon>
        <taxon>Synechococcales</taxon>
        <taxon>Synechococcaceae</taxon>
        <taxon>Synechococcus</taxon>
    </lineage>
</organism>
<gene>
    <name evidence="1" type="primary">mnmA</name>
    <name type="ordered locus">SynRCC307_1702</name>
</gene>